<comment type="function">
    <text evidence="2">Binds arsenite and regulates the expression of arsenic efflux pumps. In vitro, also binds antimony and bismuth, but not arsenate.</text>
</comment>
<comment type="subunit">
    <text evidence="2">Homodimer.</text>
</comment>
<comment type="subcellular location">
    <subcellularLocation>
        <location evidence="2">Cytoplasm</location>
    </subcellularLocation>
</comment>
<comment type="biotechnology">
    <text evidence="2">Could be used to construct robust and highly sensitive arsenic biosensors.</text>
</comment>
<dbReference type="EMBL" id="AE015451">
    <property type="protein sequence ID" value="AAN67547.1"/>
    <property type="molecule type" value="Genomic_DNA"/>
</dbReference>
<dbReference type="RefSeq" id="NP_744083.1">
    <property type="nucleotide sequence ID" value="NC_002947.4"/>
</dbReference>
<dbReference type="SMR" id="Q88LK1"/>
<dbReference type="STRING" id="160488.PP_1930"/>
<dbReference type="PaxDb" id="160488-PP_1930"/>
<dbReference type="KEGG" id="ppu:PP_1930"/>
<dbReference type="PATRIC" id="fig|160488.4.peg.2041"/>
<dbReference type="eggNOG" id="COG0640">
    <property type="taxonomic scope" value="Bacteria"/>
</dbReference>
<dbReference type="HOGENOM" id="CLU_097806_3_1_6"/>
<dbReference type="OrthoDB" id="9793058at2"/>
<dbReference type="PhylomeDB" id="Q88LK1"/>
<dbReference type="BioCyc" id="PPUT160488:G1G01-2045-MONOMER"/>
<dbReference type="Proteomes" id="UP000000556">
    <property type="component" value="Chromosome"/>
</dbReference>
<dbReference type="GO" id="GO:0005737">
    <property type="term" value="C:cytoplasm"/>
    <property type="evidence" value="ECO:0007669"/>
    <property type="project" value="UniProtKB-SubCell"/>
</dbReference>
<dbReference type="GO" id="GO:0003677">
    <property type="term" value="F:DNA binding"/>
    <property type="evidence" value="ECO:0007669"/>
    <property type="project" value="UniProtKB-KW"/>
</dbReference>
<dbReference type="GO" id="GO:0003700">
    <property type="term" value="F:DNA-binding transcription factor activity"/>
    <property type="evidence" value="ECO:0007669"/>
    <property type="project" value="InterPro"/>
</dbReference>
<dbReference type="GO" id="GO:0046872">
    <property type="term" value="F:metal ion binding"/>
    <property type="evidence" value="ECO:0007669"/>
    <property type="project" value="UniProtKB-KW"/>
</dbReference>
<dbReference type="GO" id="GO:0046685">
    <property type="term" value="P:response to arsenic-containing substance"/>
    <property type="evidence" value="ECO:0007669"/>
    <property type="project" value="UniProtKB-KW"/>
</dbReference>
<dbReference type="CDD" id="cd00090">
    <property type="entry name" value="HTH_ARSR"/>
    <property type="match status" value="1"/>
</dbReference>
<dbReference type="FunFam" id="1.10.10.10:FF:000279">
    <property type="entry name" value="Transcriptional regulator, ArsR family"/>
    <property type="match status" value="1"/>
</dbReference>
<dbReference type="Gene3D" id="1.10.10.10">
    <property type="entry name" value="Winged helix-like DNA-binding domain superfamily/Winged helix DNA-binding domain"/>
    <property type="match status" value="1"/>
</dbReference>
<dbReference type="InterPro" id="IPR011991">
    <property type="entry name" value="ArsR-like_HTH"/>
</dbReference>
<dbReference type="InterPro" id="IPR001845">
    <property type="entry name" value="HTH_ArsR_DNA-bd_dom"/>
</dbReference>
<dbReference type="InterPro" id="IPR051081">
    <property type="entry name" value="HTH_MetalResp_TranReg"/>
</dbReference>
<dbReference type="InterPro" id="IPR036388">
    <property type="entry name" value="WH-like_DNA-bd_sf"/>
</dbReference>
<dbReference type="InterPro" id="IPR036390">
    <property type="entry name" value="WH_DNA-bd_sf"/>
</dbReference>
<dbReference type="NCBIfam" id="NF033788">
    <property type="entry name" value="HTH_metalloreg"/>
    <property type="match status" value="1"/>
</dbReference>
<dbReference type="NCBIfam" id="NF007528">
    <property type="entry name" value="PRK10141.1"/>
    <property type="match status" value="1"/>
</dbReference>
<dbReference type="PANTHER" id="PTHR33154:SF18">
    <property type="entry name" value="ARSENICAL RESISTANCE OPERON REPRESSOR"/>
    <property type="match status" value="1"/>
</dbReference>
<dbReference type="PANTHER" id="PTHR33154">
    <property type="entry name" value="TRANSCRIPTIONAL REGULATOR, ARSR FAMILY"/>
    <property type="match status" value="1"/>
</dbReference>
<dbReference type="Pfam" id="PF01022">
    <property type="entry name" value="HTH_5"/>
    <property type="match status" value="1"/>
</dbReference>
<dbReference type="PRINTS" id="PR00778">
    <property type="entry name" value="HTHARSR"/>
</dbReference>
<dbReference type="SMART" id="SM00418">
    <property type="entry name" value="HTH_ARSR"/>
    <property type="match status" value="1"/>
</dbReference>
<dbReference type="SUPFAM" id="SSF46785">
    <property type="entry name" value="Winged helix' DNA-binding domain"/>
    <property type="match status" value="1"/>
</dbReference>
<dbReference type="PROSITE" id="PS50987">
    <property type="entry name" value="HTH_ARSR_2"/>
    <property type="match status" value="1"/>
</dbReference>
<accession>Q88LK1</accession>
<proteinExistence type="evidence at protein level"/>
<feature type="chain" id="PRO_0000438512" description="Arsenic resistance transcriptional regulator ArsR1">
    <location>
        <begin position="1"/>
        <end position="128"/>
    </location>
</feature>
<feature type="domain" description="HTH arsR-type" evidence="1">
    <location>
        <begin position="11"/>
        <end position="103"/>
    </location>
</feature>
<feature type="DNA-binding region" description="H-T-H motif" evidence="1">
    <location>
        <begin position="44"/>
        <end position="67"/>
    </location>
</feature>
<feature type="binding site" evidence="1 4">
    <location>
        <position position="43"/>
    </location>
    <ligand>
        <name>arsenite</name>
        <dbReference type="ChEBI" id="CHEBI:29242"/>
    </ligand>
</feature>
<feature type="binding site" evidence="1 4">
    <location>
        <position position="45"/>
    </location>
    <ligand>
        <name>arsenite</name>
        <dbReference type="ChEBI" id="CHEBI:29242"/>
    </ligand>
</feature>
<sequence length="128" mass="14487">MAVRAFPGGHMREILTPPIVFKCLADDTRARMTLLIAREGELCVCELTHALELSQPKISRHLAQLREAGILMDRRKGQWVYYRLHPEVPQWVDAMLKGVVDANQEWLSPDALRLAEMGERPQSPVACA</sequence>
<keyword id="KW-0059">Arsenical resistance</keyword>
<keyword id="KW-0963">Cytoplasm</keyword>
<keyword id="KW-0238">DNA-binding</keyword>
<keyword id="KW-0479">Metal-binding</keyword>
<keyword id="KW-0480">Metal-thiolate cluster</keyword>
<keyword id="KW-1185">Reference proteome</keyword>
<keyword id="KW-0804">Transcription</keyword>
<keyword id="KW-0805">Transcription regulation</keyword>
<name>ARSR1_PSEPK</name>
<reference key="1">
    <citation type="journal article" date="2002" name="Environ. Microbiol.">
        <title>Complete genome sequence and comparative analysis of the metabolically versatile Pseudomonas putida KT2440.</title>
        <authorList>
            <person name="Nelson K.E."/>
            <person name="Weinel C."/>
            <person name="Paulsen I.T."/>
            <person name="Dodson R.J."/>
            <person name="Hilbert H."/>
            <person name="Martins dos Santos V.A.P."/>
            <person name="Fouts D.E."/>
            <person name="Gill S.R."/>
            <person name="Pop M."/>
            <person name="Holmes M."/>
            <person name="Brinkac L.M."/>
            <person name="Beanan M.J."/>
            <person name="DeBoy R.T."/>
            <person name="Daugherty S.C."/>
            <person name="Kolonay J.F."/>
            <person name="Madupu R."/>
            <person name="Nelson W.C."/>
            <person name="White O."/>
            <person name="Peterson J.D."/>
            <person name="Khouri H.M."/>
            <person name="Hance I."/>
            <person name="Chris Lee P."/>
            <person name="Holtzapple E.K."/>
            <person name="Scanlan D."/>
            <person name="Tran K."/>
            <person name="Moazzez A."/>
            <person name="Utterback T.R."/>
            <person name="Rizzo M."/>
            <person name="Lee K."/>
            <person name="Kosack D."/>
            <person name="Moestl D."/>
            <person name="Wedler H."/>
            <person name="Lauber J."/>
            <person name="Stjepandic D."/>
            <person name="Hoheisel J."/>
            <person name="Straetz M."/>
            <person name="Heim S."/>
            <person name="Kiewitz C."/>
            <person name="Eisen J.A."/>
            <person name="Timmis K.N."/>
            <person name="Duesterhoeft A."/>
            <person name="Tuemmler B."/>
            <person name="Fraser C.M."/>
        </authorList>
    </citation>
    <scope>NUCLEOTIDE SEQUENCE [LARGE SCALE GENOMIC DNA]</scope>
    <source>
        <strain>ATCC 47054 / DSM 6125 / CFBP 8728 / NCIMB 11950 / KT2440</strain>
    </source>
</reference>
<reference key="2">
    <citation type="journal article" date="2016" name="Appl. Environ. Microbiol.">
        <title>Paralogous regulators ArsR1 and ArsR2 of Pseudomonas putida KT2440 as a basis for arsenic biosensor development.</title>
        <authorList>
            <person name="Fernandez M."/>
            <person name="Morel B."/>
            <person name="Ramos J.L."/>
            <person name="Krell T."/>
        </authorList>
    </citation>
    <scope>FUNCTION</scope>
    <scope>DNA-BINDING</scope>
    <scope>SUBUNIT</scope>
    <scope>SUBCELLULAR LOCATION</scope>
    <scope>BIOTECHNOLOGY</scope>
    <source>
        <strain>ATCC 47054 / DSM 6125 / CFBP 8728 / NCIMB 11950 / KT2440</strain>
    </source>
</reference>
<protein>
    <recommendedName>
        <fullName evidence="4">Arsenic resistance transcriptional regulator ArsR1</fullName>
    </recommendedName>
</protein>
<gene>
    <name evidence="3" type="primary">arsR1</name>
    <name evidence="5" type="synonym">arsR-I</name>
    <name evidence="5" type="ordered locus">PP_1930</name>
</gene>
<organism>
    <name type="scientific">Pseudomonas putida (strain ATCC 47054 / DSM 6125 / CFBP 8728 / NCIMB 11950 / KT2440)</name>
    <dbReference type="NCBI Taxonomy" id="160488"/>
    <lineage>
        <taxon>Bacteria</taxon>
        <taxon>Pseudomonadati</taxon>
        <taxon>Pseudomonadota</taxon>
        <taxon>Gammaproteobacteria</taxon>
        <taxon>Pseudomonadales</taxon>
        <taxon>Pseudomonadaceae</taxon>
        <taxon>Pseudomonas</taxon>
    </lineage>
</organism>
<evidence type="ECO:0000255" key="1">
    <source>
        <dbReference type="PROSITE-ProRule" id="PRU00340"/>
    </source>
</evidence>
<evidence type="ECO:0000269" key="2">
    <source>
    </source>
</evidence>
<evidence type="ECO:0000303" key="3">
    <source>
    </source>
</evidence>
<evidence type="ECO:0000305" key="4"/>
<evidence type="ECO:0000312" key="5">
    <source>
        <dbReference type="EMBL" id="AAN67547.1"/>
    </source>
</evidence>